<feature type="initiator methionine" description="Removed" evidence="1">
    <location>
        <position position="1"/>
    </location>
</feature>
<feature type="chain" id="PRO_0000133962" description="Enolase">
    <location>
        <begin position="2"/>
        <end position="432"/>
    </location>
</feature>
<feature type="active site" description="Proton donor" evidence="2">
    <location>
        <position position="209"/>
    </location>
</feature>
<feature type="active site" description="Proton acceptor" evidence="2">
    <location>
        <position position="342"/>
    </location>
</feature>
<feature type="binding site" evidence="2">
    <location>
        <position position="167"/>
    </location>
    <ligand>
        <name>(2R)-2-phosphoglycerate</name>
        <dbReference type="ChEBI" id="CHEBI:58289"/>
    </ligand>
</feature>
<feature type="binding site" evidence="2">
    <location>
        <position position="246"/>
    </location>
    <ligand>
        <name>Mg(2+)</name>
        <dbReference type="ChEBI" id="CHEBI:18420"/>
    </ligand>
</feature>
<feature type="binding site" evidence="2">
    <location>
        <position position="290"/>
    </location>
    <ligand>
        <name>Mg(2+)</name>
        <dbReference type="ChEBI" id="CHEBI:18420"/>
    </ligand>
</feature>
<feature type="binding site" evidence="2">
    <location>
        <position position="317"/>
    </location>
    <ligand>
        <name>Mg(2+)</name>
        <dbReference type="ChEBI" id="CHEBI:18420"/>
    </ligand>
</feature>
<feature type="binding site" evidence="2">
    <location>
        <position position="342"/>
    </location>
    <ligand>
        <name>(2R)-2-phosphoglycerate</name>
        <dbReference type="ChEBI" id="CHEBI:58289"/>
    </ligand>
</feature>
<feature type="binding site" evidence="2">
    <location>
        <position position="371"/>
    </location>
    <ligand>
        <name>(2R)-2-phosphoglycerate</name>
        <dbReference type="ChEBI" id="CHEBI:58289"/>
    </ligand>
</feature>
<feature type="binding site" evidence="2">
    <location>
        <position position="372"/>
    </location>
    <ligand>
        <name>(2R)-2-phosphoglycerate</name>
        <dbReference type="ChEBI" id="CHEBI:58289"/>
    </ligand>
</feature>
<feature type="binding site" evidence="2">
    <location>
        <position position="393"/>
    </location>
    <ligand>
        <name>(2R)-2-phosphoglycerate</name>
        <dbReference type="ChEBI" id="CHEBI:58289"/>
    </ligand>
</feature>
<sequence length="432" mass="45655">MSKIVKIIGREIIDSRGNPTVEAEVHLEGGFVGMAAAPSGASTGSREALELRDGDKSRFLGKGVTKAVAAVNGPIAQALIGKDAKDQAGIDKIMIDLDGTENKSKFGANAILAVSLANAKAAAAAKGMPLYEHIAELNGTPGKYSMPVPMMNIINGGEHADNNVDIQEFMIQPVGAKTVKEAIRMGSEVFHHLAKVLKAKGMNTAVGDEGGYAPNLGSNAEALAVIAEAVKAAGYELGKDITLAMDCAASEFYKDGKYVLAGEGNKAFTSEEFTHFLEELTKQYPIVSIEDGLDESDWDGFAYQTKVLGDKIQLVGDDLFVTNTKILKEGIEKGIANSILIKFNQIGSLTETLAAIKMAKDAGYTAVISHRSGETEDATIADLAVGTAAGQIKTGSMSRSDRVAKYNQLIRIEEALGEKAPYNGRKEIKGQA</sequence>
<reference key="1">
    <citation type="journal article" date="2002" name="Nucleic Acids Res.">
        <title>Genome sequence of Shigella flexneri 2a: insights into pathogenicity through comparison with genomes of Escherichia coli K12 and O157.</title>
        <authorList>
            <person name="Jin Q."/>
            <person name="Yuan Z."/>
            <person name="Xu J."/>
            <person name="Wang Y."/>
            <person name="Shen Y."/>
            <person name="Lu W."/>
            <person name="Wang J."/>
            <person name="Liu H."/>
            <person name="Yang J."/>
            <person name="Yang F."/>
            <person name="Zhang X."/>
            <person name="Zhang J."/>
            <person name="Yang G."/>
            <person name="Wu H."/>
            <person name="Qu D."/>
            <person name="Dong J."/>
            <person name="Sun L."/>
            <person name="Xue Y."/>
            <person name="Zhao A."/>
            <person name="Gao Y."/>
            <person name="Zhu J."/>
            <person name="Kan B."/>
            <person name="Ding K."/>
            <person name="Chen S."/>
            <person name="Cheng H."/>
            <person name="Yao Z."/>
            <person name="He B."/>
            <person name="Chen R."/>
            <person name="Ma D."/>
            <person name="Qiang B."/>
            <person name="Wen Y."/>
            <person name="Hou Y."/>
            <person name="Yu J."/>
        </authorList>
    </citation>
    <scope>NUCLEOTIDE SEQUENCE [LARGE SCALE GENOMIC DNA]</scope>
    <source>
        <strain>301 / Serotype 2a</strain>
    </source>
</reference>
<reference key="2">
    <citation type="journal article" date="2003" name="Infect. Immun.">
        <title>Complete genome sequence and comparative genomics of Shigella flexneri serotype 2a strain 2457T.</title>
        <authorList>
            <person name="Wei J."/>
            <person name="Goldberg M.B."/>
            <person name="Burland V."/>
            <person name="Venkatesan M.M."/>
            <person name="Deng W."/>
            <person name="Fournier G."/>
            <person name="Mayhew G.F."/>
            <person name="Plunkett G. III"/>
            <person name="Rose D.J."/>
            <person name="Darling A."/>
            <person name="Mau B."/>
            <person name="Perna N.T."/>
            <person name="Payne S.M."/>
            <person name="Runyen-Janecky L.J."/>
            <person name="Zhou S."/>
            <person name="Schwartz D.C."/>
            <person name="Blattner F.R."/>
        </authorList>
    </citation>
    <scope>NUCLEOTIDE SEQUENCE [LARGE SCALE GENOMIC DNA]</scope>
    <source>
        <strain>ATCC 700930 / 2457T / Serotype 2a</strain>
    </source>
</reference>
<name>ENO_SHIFL</name>
<comment type="function">
    <text evidence="2">Catalyzes the reversible conversion of 2-phosphoglycerate (2-PG) into phosphoenolpyruvate (PEP). It is essential for the degradation of carbohydrates via glycolysis.</text>
</comment>
<comment type="catalytic activity">
    <reaction evidence="2">
        <text>(2R)-2-phosphoglycerate = phosphoenolpyruvate + H2O</text>
        <dbReference type="Rhea" id="RHEA:10164"/>
        <dbReference type="ChEBI" id="CHEBI:15377"/>
        <dbReference type="ChEBI" id="CHEBI:58289"/>
        <dbReference type="ChEBI" id="CHEBI:58702"/>
        <dbReference type="EC" id="4.2.1.11"/>
    </reaction>
</comment>
<comment type="cofactor">
    <cofactor evidence="2">
        <name>Mg(2+)</name>
        <dbReference type="ChEBI" id="CHEBI:18420"/>
    </cofactor>
    <text evidence="2">Binds a second Mg(2+) ion via substrate during catalysis.</text>
</comment>
<comment type="pathway">
    <text evidence="2">Carbohydrate degradation; glycolysis; pyruvate from D-glyceraldehyde 3-phosphate: step 4/5.</text>
</comment>
<comment type="subunit">
    <text evidence="2">Component of the RNA degradosome, a multiprotein complex involved in RNA processing and mRNA degradation.</text>
</comment>
<comment type="subcellular location">
    <subcellularLocation>
        <location evidence="2">Cytoplasm</location>
    </subcellularLocation>
    <subcellularLocation>
        <location evidence="2">Secreted</location>
    </subcellularLocation>
    <subcellularLocation>
        <location evidence="2">Cell surface</location>
    </subcellularLocation>
    <text evidence="2">Fractions of enolase are present in both the cytoplasm and on the cell surface.</text>
</comment>
<comment type="similarity">
    <text evidence="2">Belongs to the enolase family.</text>
</comment>
<proteinExistence type="inferred from homology"/>
<evidence type="ECO:0000250" key="1"/>
<evidence type="ECO:0000255" key="2">
    <source>
        <dbReference type="HAMAP-Rule" id="MF_00318"/>
    </source>
</evidence>
<dbReference type="EC" id="4.2.1.11" evidence="2"/>
<dbReference type="EMBL" id="AE005674">
    <property type="protein sequence ID" value="AAN44282.1"/>
    <property type="molecule type" value="Genomic_DNA"/>
</dbReference>
<dbReference type="EMBL" id="AE014073">
    <property type="protein sequence ID" value="AAP18107.1"/>
    <property type="molecule type" value="Genomic_DNA"/>
</dbReference>
<dbReference type="RefSeq" id="NP_708575.1">
    <property type="nucleotide sequence ID" value="NC_004337.2"/>
</dbReference>
<dbReference type="RefSeq" id="WP_000036723.1">
    <property type="nucleotide sequence ID" value="NZ_WPGW01000063.1"/>
</dbReference>
<dbReference type="SMR" id="P0A6Q2"/>
<dbReference type="STRING" id="198214.SF2794"/>
<dbReference type="PaxDb" id="198214-SF2794"/>
<dbReference type="GeneID" id="1027407"/>
<dbReference type="GeneID" id="93779219"/>
<dbReference type="KEGG" id="sfl:SF2794"/>
<dbReference type="KEGG" id="sfx:S2988"/>
<dbReference type="PATRIC" id="fig|198214.7.peg.3327"/>
<dbReference type="HOGENOM" id="CLU_031223_2_1_6"/>
<dbReference type="UniPathway" id="UPA00109">
    <property type="reaction ID" value="UER00187"/>
</dbReference>
<dbReference type="Proteomes" id="UP000001006">
    <property type="component" value="Chromosome"/>
</dbReference>
<dbReference type="Proteomes" id="UP000002673">
    <property type="component" value="Chromosome"/>
</dbReference>
<dbReference type="GO" id="GO:0009986">
    <property type="term" value="C:cell surface"/>
    <property type="evidence" value="ECO:0007669"/>
    <property type="project" value="UniProtKB-SubCell"/>
</dbReference>
<dbReference type="GO" id="GO:0005576">
    <property type="term" value="C:extracellular region"/>
    <property type="evidence" value="ECO:0007669"/>
    <property type="project" value="UniProtKB-SubCell"/>
</dbReference>
<dbReference type="GO" id="GO:0000015">
    <property type="term" value="C:phosphopyruvate hydratase complex"/>
    <property type="evidence" value="ECO:0007669"/>
    <property type="project" value="InterPro"/>
</dbReference>
<dbReference type="GO" id="GO:0000287">
    <property type="term" value="F:magnesium ion binding"/>
    <property type="evidence" value="ECO:0007669"/>
    <property type="project" value="UniProtKB-UniRule"/>
</dbReference>
<dbReference type="GO" id="GO:0004634">
    <property type="term" value="F:phosphopyruvate hydratase activity"/>
    <property type="evidence" value="ECO:0007669"/>
    <property type="project" value="UniProtKB-UniRule"/>
</dbReference>
<dbReference type="GO" id="GO:0006096">
    <property type="term" value="P:glycolytic process"/>
    <property type="evidence" value="ECO:0007669"/>
    <property type="project" value="UniProtKB-UniRule"/>
</dbReference>
<dbReference type="CDD" id="cd03313">
    <property type="entry name" value="enolase"/>
    <property type="match status" value="1"/>
</dbReference>
<dbReference type="FunFam" id="3.20.20.120:FF:000001">
    <property type="entry name" value="Enolase"/>
    <property type="match status" value="1"/>
</dbReference>
<dbReference type="FunFam" id="3.30.390.10:FF:000001">
    <property type="entry name" value="Enolase"/>
    <property type="match status" value="1"/>
</dbReference>
<dbReference type="Gene3D" id="3.20.20.120">
    <property type="entry name" value="Enolase-like C-terminal domain"/>
    <property type="match status" value="1"/>
</dbReference>
<dbReference type="Gene3D" id="3.30.390.10">
    <property type="entry name" value="Enolase-like, N-terminal domain"/>
    <property type="match status" value="1"/>
</dbReference>
<dbReference type="HAMAP" id="MF_00318">
    <property type="entry name" value="Enolase"/>
    <property type="match status" value="1"/>
</dbReference>
<dbReference type="InterPro" id="IPR000941">
    <property type="entry name" value="Enolase"/>
</dbReference>
<dbReference type="InterPro" id="IPR036849">
    <property type="entry name" value="Enolase-like_C_sf"/>
</dbReference>
<dbReference type="InterPro" id="IPR029017">
    <property type="entry name" value="Enolase-like_N"/>
</dbReference>
<dbReference type="InterPro" id="IPR020810">
    <property type="entry name" value="Enolase_C"/>
</dbReference>
<dbReference type="InterPro" id="IPR020809">
    <property type="entry name" value="Enolase_CS"/>
</dbReference>
<dbReference type="InterPro" id="IPR020811">
    <property type="entry name" value="Enolase_N"/>
</dbReference>
<dbReference type="NCBIfam" id="TIGR01060">
    <property type="entry name" value="eno"/>
    <property type="match status" value="1"/>
</dbReference>
<dbReference type="PANTHER" id="PTHR11902">
    <property type="entry name" value="ENOLASE"/>
    <property type="match status" value="1"/>
</dbReference>
<dbReference type="PANTHER" id="PTHR11902:SF1">
    <property type="entry name" value="ENOLASE"/>
    <property type="match status" value="1"/>
</dbReference>
<dbReference type="Pfam" id="PF00113">
    <property type="entry name" value="Enolase_C"/>
    <property type="match status" value="1"/>
</dbReference>
<dbReference type="Pfam" id="PF03952">
    <property type="entry name" value="Enolase_N"/>
    <property type="match status" value="1"/>
</dbReference>
<dbReference type="PIRSF" id="PIRSF001400">
    <property type="entry name" value="Enolase"/>
    <property type="match status" value="1"/>
</dbReference>
<dbReference type="PRINTS" id="PR00148">
    <property type="entry name" value="ENOLASE"/>
</dbReference>
<dbReference type="SFLD" id="SFLDS00001">
    <property type="entry name" value="Enolase"/>
    <property type="match status" value="1"/>
</dbReference>
<dbReference type="SFLD" id="SFLDF00002">
    <property type="entry name" value="enolase"/>
    <property type="match status" value="1"/>
</dbReference>
<dbReference type="SMART" id="SM01192">
    <property type="entry name" value="Enolase_C"/>
    <property type="match status" value="1"/>
</dbReference>
<dbReference type="SMART" id="SM01193">
    <property type="entry name" value="Enolase_N"/>
    <property type="match status" value="1"/>
</dbReference>
<dbReference type="SUPFAM" id="SSF51604">
    <property type="entry name" value="Enolase C-terminal domain-like"/>
    <property type="match status" value="1"/>
</dbReference>
<dbReference type="SUPFAM" id="SSF54826">
    <property type="entry name" value="Enolase N-terminal domain-like"/>
    <property type="match status" value="1"/>
</dbReference>
<dbReference type="PROSITE" id="PS00164">
    <property type="entry name" value="ENOLASE"/>
    <property type="match status" value="1"/>
</dbReference>
<protein>
    <recommendedName>
        <fullName evidence="2">Enolase</fullName>
        <ecNumber evidence="2">4.2.1.11</ecNumber>
    </recommendedName>
    <alternativeName>
        <fullName evidence="2">2-phospho-D-glycerate hydro-lyase</fullName>
    </alternativeName>
    <alternativeName>
        <fullName evidence="2">2-phosphoglycerate dehydratase</fullName>
    </alternativeName>
</protein>
<gene>
    <name evidence="2" type="primary">eno</name>
    <name type="ordered locus">SF2794</name>
    <name type="ordered locus">S2988</name>
</gene>
<organism>
    <name type="scientific">Shigella flexneri</name>
    <dbReference type="NCBI Taxonomy" id="623"/>
    <lineage>
        <taxon>Bacteria</taxon>
        <taxon>Pseudomonadati</taxon>
        <taxon>Pseudomonadota</taxon>
        <taxon>Gammaproteobacteria</taxon>
        <taxon>Enterobacterales</taxon>
        <taxon>Enterobacteriaceae</taxon>
        <taxon>Shigella</taxon>
    </lineage>
</organism>
<keyword id="KW-0963">Cytoplasm</keyword>
<keyword id="KW-0324">Glycolysis</keyword>
<keyword id="KW-0456">Lyase</keyword>
<keyword id="KW-0460">Magnesium</keyword>
<keyword id="KW-0479">Metal-binding</keyword>
<keyword id="KW-1185">Reference proteome</keyword>
<keyword id="KW-0964">Secreted</keyword>
<accession>P0A6Q2</accession>
<accession>P08324</accession>